<protein>
    <recommendedName>
        <fullName evidence="7">AA9 family lytic polysaccharide monooxygenase E</fullName>
        <shortName evidence="7">LPMO9E</shortName>
        <ecNumber evidence="9">1.14.99.56</ecNumber>
    </recommendedName>
    <alternativeName>
        <fullName evidence="8">Cellulase LPMO9E</fullName>
    </alternativeName>
    <alternativeName>
        <fullName evidence="8">Endo-beta-1,4-glucanase LPMO9E</fullName>
        <shortName evidence="8">Endoglucanase LPMO9E</shortName>
    </alternativeName>
    <alternativeName>
        <fullName evidence="8">Glycosyl hydrolase 61 family protein LPMO9E</fullName>
    </alternativeName>
</protein>
<gene>
    <name evidence="7" type="primary">LPMO9E</name>
    <name type="ORF">AN9524</name>
    <name type="ORF">ANIA_09524</name>
</gene>
<dbReference type="EC" id="1.14.99.56" evidence="9"/>
<dbReference type="EMBL" id="BN001306">
    <property type="protein sequence ID" value="CBF83171.1"/>
    <property type="molecule type" value="Genomic_DNA"/>
</dbReference>
<dbReference type="RefSeq" id="XP_868906.1">
    <property type="nucleotide sequence ID" value="XM_863813.1"/>
</dbReference>
<dbReference type="SMR" id="Q5AQA6"/>
<dbReference type="STRING" id="227321.Q5AQA6"/>
<dbReference type="CAZy" id="AA9">
    <property type="family name" value="Auxiliary Activities 9"/>
</dbReference>
<dbReference type="CAZy" id="CBM1">
    <property type="family name" value="Carbohydrate-Binding Module Family 1"/>
</dbReference>
<dbReference type="EnsemblFungi" id="CBF83171">
    <property type="protein sequence ID" value="CBF83171"/>
    <property type="gene ID" value="ANIA_09524"/>
</dbReference>
<dbReference type="GeneID" id="3684123"/>
<dbReference type="KEGG" id="ani:ANIA_09524"/>
<dbReference type="VEuPathDB" id="FungiDB:AN9524"/>
<dbReference type="eggNOG" id="ENOG502RY3D">
    <property type="taxonomic scope" value="Eukaryota"/>
</dbReference>
<dbReference type="HOGENOM" id="CLU_031730_1_0_1"/>
<dbReference type="InParanoid" id="Q5AQA6"/>
<dbReference type="OMA" id="SFDGWDI"/>
<dbReference type="OrthoDB" id="4849160at2759"/>
<dbReference type="Proteomes" id="UP000000560">
    <property type="component" value="Chromosome VI"/>
</dbReference>
<dbReference type="GO" id="GO:0005576">
    <property type="term" value="C:extracellular region"/>
    <property type="evidence" value="ECO:0007669"/>
    <property type="project" value="UniProtKB-SubCell"/>
</dbReference>
<dbReference type="GO" id="GO:0008810">
    <property type="term" value="F:cellulase activity"/>
    <property type="evidence" value="ECO:0007669"/>
    <property type="project" value="UniProtKB-EC"/>
</dbReference>
<dbReference type="GO" id="GO:0030248">
    <property type="term" value="F:cellulose binding"/>
    <property type="evidence" value="ECO:0007669"/>
    <property type="project" value="InterPro"/>
</dbReference>
<dbReference type="GO" id="GO:0046872">
    <property type="term" value="F:metal ion binding"/>
    <property type="evidence" value="ECO:0007669"/>
    <property type="project" value="UniProtKB-KW"/>
</dbReference>
<dbReference type="GO" id="GO:0004497">
    <property type="term" value="F:monooxygenase activity"/>
    <property type="evidence" value="ECO:0007669"/>
    <property type="project" value="UniProtKB-KW"/>
</dbReference>
<dbReference type="GO" id="GO:0030245">
    <property type="term" value="P:cellulose catabolic process"/>
    <property type="evidence" value="ECO:0007669"/>
    <property type="project" value="UniProtKB-KW"/>
</dbReference>
<dbReference type="CDD" id="cd21175">
    <property type="entry name" value="LPMO_AA9"/>
    <property type="match status" value="1"/>
</dbReference>
<dbReference type="Gene3D" id="2.70.50.70">
    <property type="match status" value="1"/>
</dbReference>
<dbReference type="InterPro" id="IPR049892">
    <property type="entry name" value="AA9"/>
</dbReference>
<dbReference type="InterPro" id="IPR005103">
    <property type="entry name" value="AA9_LPMO"/>
</dbReference>
<dbReference type="InterPro" id="IPR035971">
    <property type="entry name" value="CBD_sf"/>
</dbReference>
<dbReference type="InterPro" id="IPR000254">
    <property type="entry name" value="Cellulose-bd_dom_fun"/>
</dbReference>
<dbReference type="PANTHER" id="PTHR33353:SF36">
    <property type="entry name" value="ENDO-BETA-1,4-GLUCANASE D"/>
    <property type="match status" value="1"/>
</dbReference>
<dbReference type="PANTHER" id="PTHR33353">
    <property type="entry name" value="PUTATIVE (AFU_ORTHOLOGUE AFUA_1G12560)-RELATED"/>
    <property type="match status" value="1"/>
</dbReference>
<dbReference type="Pfam" id="PF03443">
    <property type="entry name" value="AA9"/>
    <property type="match status" value="1"/>
</dbReference>
<dbReference type="Pfam" id="PF00734">
    <property type="entry name" value="CBM_1"/>
    <property type="match status" value="1"/>
</dbReference>
<dbReference type="SMART" id="SM00236">
    <property type="entry name" value="fCBD"/>
    <property type="match status" value="1"/>
</dbReference>
<dbReference type="SUPFAM" id="SSF57180">
    <property type="entry name" value="Cellulose-binding domain"/>
    <property type="match status" value="1"/>
</dbReference>
<dbReference type="PROSITE" id="PS00562">
    <property type="entry name" value="CBM1_1"/>
    <property type="match status" value="1"/>
</dbReference>
<dbReference type="PROSITE" id="PS51164">
    <property type="entry name" value="CBM1_2"/>
    <property type="match status" value="1"/>
</dbReference>
<name>LP9E_EMENI</name>
<keyword id="KW-0119">Carbohydrate metabolism</keyword>
<keyword id="KW-0136">Cellulose degradation</keyword>
<keyword id="KW-0186">Copper</keyword>
<keyword id="KW-1015">Disulfide bond</keyword>
<keyword id="KW-0325">Glycoprotein</keyword>
<keyword id="KW-0479">Metal-binding</keyword>
<keyword id="KW-0503">Monooxygenase</keyword>
<keyword id="KW-0560">Oxidoreductase</keyword>
<keyword id="KW-0624">Polysaccharide degradation</keyword>
<keyword id="KW-1185">Reference proteome</keyword>
<keyword id="KW-0964">Secreted</keyword>
<keyword id="KW-0732">Signal</keyword>
<comment type="function">
    <text evidence="9">Lytic polysaccharide monooxygenase (LPMO) that depolymerizes crystalline and amorphous polysaccharides via the oxidation of scissile alpha- or beta-(1-4)-glycosidic bonds, yielding C1 or C4 oxidation products (Probable). Catalysis by LPMOs requires the reduction of the active-site copper from Cu(II) to Cu(I) by a reducing agent and H(2)O(2) or O(2) as a cosubstrate (Probable).</text>
</comment>
<comment type="catalytic activity">
    <reaction evidence="9">
        <text>[(1-&gt;4)-beta-D-glucosyl]n+m + reduced acceptor + O2 = 4-dehydro-beta-D-glucosyl-[(1-&gt;4)-beta-D-glucosyl]n-1 + [(1-&gt;4)-beta-D-glucosyl]m + acceptor + H2O.</text>
        <dbReference type="EC" id="1.14.99.56"/>
    </reaction>
</comment>
<comment type="cofactor">
    <cofactor evidence="1">
        <name>Cu(2+)</name>
        <dbReference type="ChEBI" id="CHEBI:29036"/>
    </cofactor>
    <text evidence="1">Binds 1 copper ion per subunit.</text>
</comment>
<comment type="subcellular location">
    <subcellularLocation>
        <location evidence="9">Secreted</location>
    </subcellularLocation>
</comment>
<comment type="induction">
    <text evidence="6">Expression is significantly induced by xylan and slightly induce by cellulose (PubMed:27075737). The degenerate binding motif 5'-SYGGRG-3' that binds to creA involved in carbon catabolite repression is present in the promoter (PubMed:27075737).</text>
</comment>
<comment type="domain">
    <text evidence="9">Has a modular structure: an endo-beta-1,4-glucanase catalytic module at the N-terminus, a linker rich in serines and threonines, and a C-terminal carbohydrate-binding module (CBM). The genes for catalytic modules and CBMs seem to have evolved separately and have been linked by gene fusion.</text>
</comment>
<comment type="biotechnology">
    <text evidence="9">Lignocellulose is the most abundant polymeric composite on Earth and is a recalcitrant but promising renewable substrate for industrial biotechnology applications. Together with cellobiose dehydrogenases (CDHs) an enzymatic system capable of oxidative cellulose cleavage is formed, which increases the efficiency of cellulases and put LPMOs at focus of biofuel research.</text>
</comment>
<comment type="similarity">
    <text evidence="8">Belongs to the polysaccharide monooxygenase AA9 family.</text>
</comment>
<sequence>MSRLVSFASLLAAVNAHGYVQNIVVNGVYYSGWEINTYPYMTDPPVVAAWQIPNSNGPVDVSNGYTTEDIICNLNATNAAGYVEVAAGDKINLQWSAWPDTHHGPVISYLADCGDDCTTVDKTTLEFFKIDAVGLVDDSTVPGTWGDDELIENNNSWMVEIPTSIAPGNYVLRHEIIALHSAGTEGGAQNYPQCFNLKVTGSGTDSPAGTLGTELYNLDDPGILVNIYASLSTYVIPGPTLYSGATSIAQATSAITATGSATSGAGGAAATGSSAATTTAAAASTTATPTTAAAQTAKSASAPSSAATGSVPAAPTTATVSTTTSIATSVGTTLTRTTLATTTTAAAAEPSASAPAPSGNSASGSNPLYAQCGGLNFKGASGCVAGATCKKMNPYYSQCVSA</sequence>
<accession>Q5AQA6</accession>
<accession>C8VI93</accession>
<reference key="1">
    <citation type="journal article" date="2005" name="Nature">
        <title>Sequencing of Aspergillus nidulans and comparative analysis with A. fumigatus and A. oryzae.</title>
        <authorList>
            <person name="Galagan J.E."/>
            <person name="Calvo S.E."/>
            <person name="Cuomo C."/>
            <person name="Ma L.-J."/>
            <person name="Wortman J.R."/>
            <person name="Batzoglou S."/>
            <person name="Lee S.-I."/>
            <person name="Bastuerkmen M."/>
            <person name="Spevak C.C."/>
            <person name="Clutterbuck J."/>
            <person name="Kapitonov V."/>
            <person name="Jurka J."/>
            <person name="Scazzocchio C."/>
            <person name="Farman M.L."/>
            <person name="Butler J."/>
            <person name="Purcell S."/>
            <person name="Harris S."/>
            <person name="Braus G.H."/>
            <person name="Draht O."/>
            <person name="Busch S."/>
            <person name="D'Enfert C."/>
            <person name="Bouchier C."/>
            <person name="Goldman G.H."/>
            <person name="Bell-Pedersen D."/>
            <person name="Griffiths-Jones S."/>
            <person name="Doonan J.H."/>
            <person name="Yu J."/>
            <person name="Vienken K."/>
            <person name="Pain A."/>
            <person name="Freitag M."/>
            <person name="Selker E.U."/>
            <person name="Archer D.B."/>
            <person name="Penalva M.A."/>
            <person name="Oakley B.R."/>
            <person name="Momany M."/>
            <person name="Tanaka T."/>
            <person name="Kumagai T."/>
            <person name="Asai K."/>
            <person name="Machida M."/>
            <person name="Nierman W.C."/>
            <person name="Denning D.W."/>
            <person name="Caddick M.X."/>
            <person name="Hynes M."/>
            <person name="Paoletti M."/>
            <person name="Fischer R."/>
            <person name="Miller B.L."/>
            <person name="Dyer P.S."/>
            <person name="Sachs M.S."/>
            <person name="Osmani S.A."/>
            <person name="Birren B.W."/>
        </authorList>
    </citation>
    <scope>NUCLEOTIDE SEQUENCE [LARGE SCALE GENOMIC DNA]</scope>
    <source>
        <strain>FGSC A4 / ATCC 38163 / CBS 112.46 / NRRL 194 / M139</strain>
    </source>
</reference>
<reference key="2">
    <citation type="journal article" date="2009" name="Fungal Genet. Biol.">
        <title>The 2008 update of the Aspergillus nidulans genome annotation: a community effort.</title>
        <authorList>
            <person name="Wortman J.R."/>
            <person name="Gilsenan J.M."/>
            <person name="Joardar V."/>
            <person name="Deegan J."/>
            <person name="Clutterbuck J."/>
            <person name="Andersen M.R."/>
            <person name="Archer D."/>
            <person name="Bencina M."/>
            <person name="Braus G."/>
            <person name="Coutinho P."/>
            <person name="von Dohren H."/>
            <person name="Doonan J."/>
            <person name="Driessen A.J."/>
            <person name="Durek P."/>
            <person name="Espeso E."/>
            <person name="Fekete E."/>
            <person name="Flipphi M."/>
            <person name="Estrada C.G."/>
            <person name="Geysens S."/>
            <person name="Goldman G."/>
            <person name="de Groot P.W."/>
            <person name="Hansen K."/>
            <person name="Harris S.D."/>
            <person name="Heinekamp T."/>
            <person name="Helmstaedt K."/>
            <person name="Henrissat B."/>
            <person name="Hofmann G."/>
            <person name="Homan T."/>
            <person name="Horio T."/>
            <person name="Horiuchi H."/>
            <person name="James S."/>
            <person name="Jones M."/>
            <person name="Karaffa L."/>
            <person name="Karanyi Z."/>
            <person name="Kato M."/>
            <person name="Keller N."/>
            <person name="Kelly D.E."/>
            <person name="Kiel J.A."/>
            <person name="Kim J.M."/>
            <person name="van der Klei I.J."/>
            <person name="Klis F.M."/>
            <person name="Kovalchuk A."/>
            <person name="Krasevec N."/>
            <person name="Kubicek C.P."/>
            <person name="Liu B."/>
            <person name="Maccabe A."/>
            <person name="Meyer V."/>
            <person name="Mirabito P."/>
            <person name="Miskei M."/>
            <person name="Mos M."/>
            <person name="Mullins J."/>
            <person name="Nelson D.R."/>
            <person name="Nielsen J."/>
            <person name="Oakley B.R."/>
            <person name="Osmani S.A."/>
            <person name="Pakula T."/>
            <person name="Paszewski A."/>
            <person name="Paulsen I."/>
            <person name="Pilsyk S."/>
            <person name="Pocsi I."/>
            <person name="Punt P.J."/>
            <person name="Ram A.F."/>
            <person name="Ren Q."/>
            <person name="Robellet X."/>
            <person name="Robson G."/>
            <person name="Seiboth B."/>
            <person name="van Solingen P."/>
            <person name="Specht T."/>
            <person name="Sun J."/>
            <person name="Taheri-Talesh N."/>
            <person name="Takeshita N."/>
            <person name="Ussery D."/>
            <person name="vanKuyk P.A."/>
            <person name="Visser H."/>
            <person name="van de Vondervoort P.J."/>
            <person name="de Vries R.P."/>
            <person name="Walton J."/>
            <person name="Xiang X."/>
            <person name="Xiong Y."/>
            <person name="Zeng A.P."/>
            <person name="Brandt B.W."/>
            <person name="Cornell M.J."/>
            <person name="van den Hondel C.A."/>
            <person name="Visser J."/>
            <person name="Oliver S.G."/>
            <person name="Turner G."/>
        </authorList>
    </citation>
    <scope>GENOME REANNOTATION</scope>
    <source>
        <strain>FGSC A4 / ATCC 38163 / CBS 112.46 / NRRL 194 / M139</strain>
    </source>
</reference>
<reference key="3">
    <citation type="journal article" date="2016" name="Appl. Microbiol. Biotechnol.">
        <title>A family of AA9 lytic polysaccharide monooxygenases in Aspergillus nidulans is differentially regulated by multiple substrates and at least one is active on cellulose and xyloglucan.</title>
        <authorList>
            <person name="Jagadeeswaran G."/>
            <person name="Gainey L."/>
            <person name="Prade R."/>
            <person name="Mort A.J."/>
        </authorList>
    </citation>
    <scope>FUNCTION</scope>
    <scope>INDUCTION</scope>
    <scope>BIOTECHNOLOGY</scope>
</reference>
<reference key="4">
    <citation type="journal article" date="2016" name="Biotechnol. Biofuels">
        <title>Lytic polysaccharide monooxygenases and other oxidative enzymes are abundantly secreted by Aspergillus nidulans grown on different starches.</title>
        <authorList>
            <person name="Nekiunaite L."/>
            <person name="Arntzen M.O."/>
            <person name="Svensson B."/>
            <person name="Vaaje-Kolstad G."/>
            <person name="Abou Hachem M."/>
        </authorList>
    </citation>
    <scope>IDENTIFICATION</scope>
</reference>
<proteinExistence type="evidence at transcript level"/>
<evidence type="ECO:0000250" key="1">
    <source>
        <dbReference type="UniProtKB" id="Q1K8B6"/>
    </source>
</evidence>
<evidence type="ECO:0000250" key="2">
    <source>
        <dbReference type="UniProtKB" id="Q4WP32"/>
    </source>
</evidence>
<evidence type="ECO:0000255" key="3"/>
<evidence type="ECO:0000255" key="4">
    <source>
        <dbReference type="PROSITE-ProRule" id="PRU00498"/>
    </source>
</evidence>
<evidence type="ECO:0000255" key="5">
    <source>
        <dbReference type="PROSITE-ProRule" id="PRU00597"/>
    </source>
</evidence>
<evidence type="ECO:0000269" key="6">
    <source>
    </source>
</evidence>
<evidence type="ECO:0000303" key="7">
    <source>
    </source>
</evidence>
<evidence type="ECO:0000305" key="8"/>
<evidence type="ECO:0000305" key="9">
    <source>
    </source>
</evidence>
<feature type="signal peptide" evidence="3">
    <location>
        <begin position="1"/>
        <end position="16"/>
    </location>
</feature>
<feature type="chain" id="PRO_5010179224" description="AA9 family lytic polysaccharide monooxygenase E">
    <location>
        <begin position="17"/>
        <end position="402"/>
    </location>
</feature>
<feature type="domain" description="CBM1" evidence="5">
    <location>
        <begin position="364"/>
        <end position="400"/>
    </location>
</feature>
<feature type="binding site" evidence="1">
    <location>
        <position position="17"/>
    </location>
    <ligand>
        <name>Cu(2+)</name>
        <dbReference type="ChEBI" id="CHEBI:29036"/>
        <note>catalytic</note>
    </ligand>
</feature>
<feature type="binding site" evidence="1">
    <location>
        <position position="102"/>
    </location>
    <ligand>
        <name>Cu(2+)</name>
        <dbReference type="ChEBI" id="CHEBI:29036"/>
        <note>catalytic</note>
    </ligand>
</feature>
<feature type="binding site" evidence="1">
    <location>
        <position position="180"/>
    </location>
    <ligand>
        <name>O2</name>
        <dbReference type="ChEBI" id="CHEBI:15379"/>
    </ligand>
</feature>
<feature type="binding site" evidence="1">
    <location>
        <position position="189"/>
    </location>
    <ligand>
        <name>O2</name>
        <dbReference type="ChEBI" id="CHEBI:15379"/>
    </ligand>
</feature>
<feature type="binding site" evidence="1">
    <location>
        <position position="191"/>
    </location>
    <ligand>
        <name>Cu(2+)</name>
        <dbReference type="ChEBI" id="CHEBI:29036"/>
        <note>catalytic</note>
    </ligand>
</feature>
<feature type="glycosylation site" description="N-linked (GlcNAc...) asparagine" evidence="4">
    <location>
        <position position="75"/>
    </location>
</feature>
<feature type="glycosylation site" description="N-linked (GlcNAc...) asparagine" evidence="4">
    <location>
        <position position="154"/>
    </location>
</feature>
<feature type="disulfide bond" evidence="2">
    <location>
        <begin position="72"/>
        <end position="194"/>
    </location>
</feature>
<feature type="disulfide bond" evidence="2">
    <location>
        <begin position="113"/>
        <end position="117"/>
    </location>
</feature>
<organism>
    <name type="scientific">Emericella nidulans (strain FGSC A4 / ATCC 38163 / CBS 112.46 / NRRL 194 / M139)</name>
    <name type="common">Aspergillus nidulans</name>
    <dbReference type="NCBI Taxonomy" id="227321"/>
    <lineage>
        <taxon>Eukaryota</taxon>
        <taxon>Fungi</taxon>
        <taxon>Dikarya</taxon>
        <taxon>Ascomycota</taxon>
        <taxon>Pezizomycotina</taxon>
        <taxon>Eurotiomycetes</taxon>
        <taxon>Eurotiomycetidae</taxon>
        <taxon>Eurotiales</taxon>
        <taxon>Aspergillaceae</taxon>
        <taxon>Aspergillus</taxon>
        <taxon>Aspergillus subgen. Nidulantes</taxon>
    </lineage>
</organism>